<proteinExistence type="inferred from homology"/>
<evidence type="ECO:0000255" key="1">
    <source>
        <dbReference type="HAMAP-Rule" id="MF_00057"/>
    </source>
</evidence>
<feature type="chain" id="PRO_0000370171" description="3-deoxy-manno-octulosonate cytidylyltransferase">
    <location>
        <begin position="1"/>
        <end position="259"/>
    </location>
</feature>
<dbReference type="EC" id="2.7.7.38" evidence="1"/>
<dbReference type="EMBL" id="AE008923">
    <property type="protein sequence ID" value="AAM36946.1"/>
    <property type="molecule type" value="Genomic_DNA"/>
</dbReference>
<dbReference type="RefSeq" id="WP_003490553.1">
    <property type="nucleotide sequence ID" value="NC_003919.1"/>
</dbReference>
<dbReference type="SMR" id="Q8PKS3"/>
<dbReference type="GeneID" id="66911224"/>
<dbReference type="KEGG" id="xac:XAC2089"/>
<dbReference type="eggNOG" id="COG1212">
    <property type="taxonomic scope" value="Bacteria"/>
</dbReference>
<dbReference type="HOGENOM" id="CLU_065038_1_0_6"/>
<dbReference type="UniPathway" id="UPA00030"/>
<dbReference type="UniPathway" id="UPA00358">
    <property type="reaction ID" value="UER00476"/>
</dbReference>
<dbReference type="Proteomes" id="UP000000576">
    <property type="component" value="Chromosome"/>
</dbReference>
<dbReference type="GO" id="GO:0005829">
    <property type="term" value="C:cytosol"/>
    <property type="evidence" value="ECO:0007669"/>
    <property type="project" value="TreeGrafter"/>
</dbReference>
<dbReference type="GO" id="GO:0008690">
    <property type="term" value="F:3-deoxy-manno-octulosonate cytidylyltransferase activity"/>
    <property type="evidence" value="ECO:0007669"/>
    <property type="project" value="UniProtKB-UniRule"/>
</dbReference>
<dbReference type="GO" id="GO:0033468">
    <property type="term" value="P:CMP-keto-3-deoxy-D-manno-octulosonic acid biosynthetic process"/>
    <property type="evidence" value="ECO:0007669"/>
    <property type="project" value="UniProtKB-UniRule"/>
</dbReference>
<dbReference type="GO" id="GO:0009103">
    <property type="term" value="P:lipopolysaccharide biosynthetic process"/>
    <property type="evidence" value="ECO:0007669"/>
    <property type="project" value="UniProtKB-UniRule"/>
</dbReference>
<dbReference type="CDD" id="cd02517">
    <property type="entry name" value="CMP-KDO-Synthetase"/>
    <property type="match status" value="1"/>
</dbReference>
<dbReference type="FunFam" id="3.90.550.10:FF:000011">
    <property type="entry name" value="3-deoxy-manno-octulosonate cytidylyltransferase"/>
    <property type="match status" value="1"/>
</dbReference>
<dbReference type="Gene3D" id="3.90.550.10">
    <property type="entry name" value="Spore Coat Polysaccharide Biosynthesis Protein SpsA, Chain A"/>
    <property type="match status" value="1"/>
</dbReference>
<dbReference type="HAMAP" id="MF_00057">
    <property type="entry name" value="KdsB"/>
    <property type="match status" value="1"/>
</dbReference>
<dbReference type="InterPro" id="IPR003329">
    <property type="entry name" value="Cytidylyl_trans"/>
</dbReference>
<dbReference type="InterPro" id="IPR004528">
    <property type="entry name" value="KdsB"/>
</dbReference>
<dbReference type="InterPro" id="IPR029044">
    <property type="entry name" value="Nucleotide-diphossugar_trans"/>
</dbReference>
<dbReference type="NCBIfam" id="TIGR00466">
    <property type="entry name" value="kdsB"/>
    <property type="match status" value="1"/>
</dbReference>
<dbReference type="NCBIfam" id="NF003952">
    <property type="entry name" value="PRK05450.1-5"/>
    <property type="match status" value="1"/>
</dbReference>
<dbReference type="PANTHER" id="PTHR42866">
    <property type="entry name" value="3-DEOXY-MANNO-OCTULOSONATE CYTIDYLYLTRANSFERASE"/>
    <property type="match status" value="1"/>
</dbReference>
<dbReference type="PANTHER" id="PTHR42866:SF2">
    <property type="entry name" value="3-DEOXY-MANNO-OCTULOSONATE CYTIDYLYLTRANSFERASE, MITOCHONDRIAL"/>
    <property type="match status" value="1"/>
</dbReference>
<dbReference type="Pfam" id="PF02348">
    <property type="entry name" value="CTP_transf_3"/>
    <property type="match status" value="1"/>
</dbReference>
<dbReference type="SUPFAM" id="SSF53448">
    <property type="entry name" value="Nucleotide-diphospho-sugar transferases"/>
    <property type="match status" value="1"/>
</dbReference>
<sequence>MTPTTPADFVVAIPARYASTRLPGKPLQLIGDRPMIQHVAERALLAGAREVWVATDDARIVAAIEHLPGVHVAMTGTAHLSGTDRLAECARIAGWDDQACVVNLQGDEPFAPAAGIRAVADLLQRSGAQMATLAAPVDNAHDLFDPNVVKLVRTAGGDALYFSRAPIPWHRDSFASQHDSVPAEGQWLRHIGIYAYRAGFLQRFAAMPPGMLERTESLEQLRVMEAGYRIAVAVTPEPFPPGIDTADDLVRAQMRVASA</sequence>
<organism>
    <name type="scientific">Xanthomonas axonopodis pv. citri (strain 306)</name>
    <dbReference type="NCBI Taxonomy" id="190486"/>
    <lineage>
        <taxon>Bacteria</taxon>
        <taxon>Pseudomonadati</taxon>
        <taxon>Pseudomonadota</taxon>
        <taxon>Gammaproteobacteria</taxon>
        <taxon>Lysobacterales</taxon>
        <taxon>Lysobacteraceae</taxon>
        <taxon>Xanthomonas</taxon>
    </lineage>
</organism>
<comment type="function">
    <text evidence="1">Activates KDO (a required 8-carbon sugar) for incorporation into bacterial lipopolysaccharide in Gram-negative bacteria.</text>
</comment>
<comment type="catalytic activity">
    <reaction evidence="1">
        <text>3-deoxy-alpha-D-manno-oct-2-ulosonate + CTP = CMP-3-deoxy-beta-D-manno-octulosonate + diphosphate</text>
        <dbReference type="Rhea" id="RHEA:23448"/>
        <dbReference type="ChEBI" id="CHEBI:33019"/>
        <dbReference type="ChEBI" id="CHEBI:37563"/>
        <dbReference type="ChEBI" id="CHEBI:85986"/>
        <dbReference type="ChEBI" id="CHEBI:85987"/>
        <dbReference type="EC" id="2.7.7.38"/>
    </reaction>
</comment>
<comment type="pathway">
    <text evidence="1">Nucleotide-sugar biosynthesis; CMP-3-deoxy-D-manno-octulosonate biosynthesis; CMP-3-deoxy-D-manno-octulosonate from 3-deoxy-D-manno-octulosonate and CTP: step 1/1.</text>
</comment>
<comment type="pathway">
    <text evidence="1">Bacterial outer membrane biogenesis; lipopolysaccharide biosynthesis.</text>
</comment>
<comment type="subcellular location">
    <subcellularLocation>
        <location evidence="1">Cytoplasm</location>
    </subcellularLocation>
</comment>
<comment type="similarity">
    <text evidence="1">Belongs to the KdsB family.</text>
</comment>
<protein>
    <recommendedName>
        <fullName evidence="1">3-deoxy-manno-octulosonate cytidylyltransferase</fullName>
        <ecNumber evidence="1">2.7.7.38</ecNumber>
    </recommendedName>
    <alternativeName>
        <fullName evidence="1">CMP-2-keto-3-deoxyoctulosonic acid synthase</fullName>
        <shortName evidence="1">CKS</shortName>
        <shortName evidence="1">CMP-KDO synthase</shortName>
    </alternativeName>
</protein>
<gene>
    <name evidence="1" type="primary">kdsB</name>
    <name type="ordered locus">XAC2089</name>
</gene>
<keyword id="KW-0963">Cytoplasm</keyword>
<keyword id="KW-0448">Lipopolysaccharide biosynthesis</keyword>
<keyword id="KW-0548">Nucleotidyltransferase</keyword>
<keyword id="KW-0808">Transferase</keyword>
<name>KDSB_XANAC</name>
<accession>Q8PKS3</accession>
<reference key="1">
    <citation type="journal article" date="2002" name="Nature">
        <title>Comparison of the genomes of two Xanthomonas pathogens with differing host specificities.</title>
        <authorList>
            <person name="da Silva A.C.R."/>
            <person name="Ferro J.A."/>
            <person name="Reinach F.C."/>
            <person name="Farah C.S."/>
            <person name="Furlan L.R."/>
            <person name="Quaggio R.B."/>
            <person name="Monteiro-Vitorello C.B."/>
            <person name="Van Sluys M.A."/>
            <person name="Almeida N.F. Jr."/>
            <person name="Alves L.M.C."/>
            <person name="do Amaral A.M."/>
            <person name="Bertolini M.C."/>
            <person name="Camargo L.E.A."/>
            <person name="Camarotte G."/>
            <person name="Cannavan F."/>
            <person name="Cardozo J."/>
            <person name="Chambergo F."/>
            <person name="Ciapina L.P."/>
            <person name="Cicarelli R.M.B."/>
            <person name="Coutinho L.L."/>
            <person name="Cursino-Santos J.R."/>
            <person name="El-Dorry H."/>
            <person name="Faria J.B."/>
            <person name="Ferreira A.J.S."/>
            <person name="Ferreira R.C.C."/>
            <person name="Ferro M.I.T."/>
            <person name="Formighieri E.F."/>
            <person name="Franco M.C."/>
            <person name="Greggio C.C."/>
            <person name="Gruber A."/>
            <person name="Katsuyama A.M."/>
            <person name="Kishi L.T."/>
            <person name="Leite R.P."/>
            <person name="Lemos E.G.M."/>
            <person name="Lemos M.V.F."/>
            <person name="Locali E.C."/>
            <person name="Machado M.A."/>
            <person name="Madeira A.M.B.N."/>
            <person name="Martinez-Rossi N.M."/>
            <person name="Martins E.C."/>
            <person name="Meidanis J."/>
            <person name="Menck C.F.M."/>
            <person name="Miyaki C.Y."/>
            <person name="Moon D.H."/>
            <person name="Moreira L.M."/>
            <person name="Novo M.T.M."/>
            <person name="Okura V.K."/>
            <person name="Oliveira M.C."/>
            <person name="Oliveira V.R."/>
            <person name="Pereira H.A."/>
            <person name="Rossi A."/>
            <person name="Sena J.A.D."/>
            <person name="Silva C."/>
            <person name="de Souza R.F."/>
            <person name="Spinola L.A.F."/>
            <person name="Takita M.A."/>
            <person name="Tamura R.E."/>
            <person name="Teixeira E.C."/>
            <person name="Tezza R.I.D."/>
            <person name="Trindade dos Santos M."/>
            <person name="Truffi D."/>
            <person name="Tsai S.M."/>
            <person name="White F.F."/>
            <person name="Setubal J.C."/>
            <person name="Kitajima J.P."/>
        </authorList>
    </citation>
    <scope>NUCLEOTIDE SEQUENCE [LARGE SCALE GENOMIC DNA]</scope>
    <source>
        <strain>306</strain>
    </source>
</reference>